<accession>Q2N695</accession>
<evidence type="ECO:0000255" key="1">
    <source>
        <dbReference type="HAMAP-Rule" id="MF_00558"/>
    </source>
</evidence>
<sequence length="399" mass="42505">MNLHEYQAKELLAKYGIGIPAGHAALTVEEAVAGAKQLPGPLYVVKAQIHAGGRGKGKFKELGPDAKGGVRLAKSIEDVEASAREMLGNTLVTVQTGEEGKQVNRLYVTDGVDIASEYYLSMVVDRASGRVGMIVSTEGGMDIEEVAHSTPEKITTITIDPAQGFMPHHGRAVAFALKLSGDLNKQAQKLAKQLYTAFMDLDCEMLEINPLVETEDGQLLVLDTKMSIDGNALYRHKDVEEMRDETEEDPAEVEASEYDLAYIKLDGNIGCMVNGAGLAMATMDIIKLNGAFPANFLDVGGGATTEKVTAAFKIILKDPAVEGILVNIFGGIMRCDTIAEGIVVAAKEVELDVPLVVRLEGTNVEKGKDILANSGLPIVPADDLGDAARKIVAEVKQAA</sequence>
<keyword id="KW-0067">ATP-binding</keyword>
<keyword id="KW-0436">Ligase</keyword>
<keyword id="KW-0460">Magnesium</keyword>
<keyword id="KW-0479">Metal-binding</keyword>
<keyword id="KW-0547">Nucleotide-binding</keyword>
<keyword id="KW-1185">Reference proteome</keyword>
<keyword id="KW-0816">Tricarboxylic acid cycle</keyword>
<comment type="function">
    <text evidence="1">Succinyl-CoA synthetase functions in the citric acid cycle (TCA), coupling the hydrolysis of succinyl-CoA to the synthesis of either ATP or GTP and thus represents the only step of substrate-level phosphorylation in the TCA. The beta subunit provides nucleotide specificity of the enzyme and binds the substrate succinate, while the binding sites for coenzyme A and phosphate are found in the alpha subunit.</text>
</comment>
<comment type="catalytic activity">
    <reaction evidence="1">
        <text>succinate + ATP + CoA = succinyl-CoA + ADP + phosphate</text>
        <dbReference type="Rhea" id="RHEA:17661"/>
        <dbReference type="ChEBI" id="CHEBI:30031"/>
        <dbReference type="ChEBI" id="CHEBI:30616"/>
        <dbReference type="ChEBI" id="CHEBI:43474"/>
        <dbReference type="ChEBI" id="CHEBI:57287"/>
        <dbReference type="ChEBI" id="CHEBI:57292"/>
        <dbReference type="ChEBI" id="CHEBI:456216"/>
        <dbReference type="EC" id="6.2.1.5"/>
    </reaction>
    <physiologicalReaction direction="right-to-left" evidence="1">
        <dbReference type="Rhea" id="RHEA:17663"/>
    </physiologicalReaction>
</comment>
<comment type="catalytic activity">
    <reaction evidence="1">
        <text>GTP + succinate + CoA = succinyl-CoA + GDP + phosphate</text>
        <dbReference type="Rhea" id="RHEA:22120"/>
        <dbReference type="ChEBI" id="CHEBI:30031"/>
        <dbReference type="ChEBI" id="CHEBI:37565"/>
        <dbReference type="ChEBI" id="CHEBI:43474"/>
        <dbReference type="ChEBI" id="CHEBI:57287"/>
        <dbReference type="ChEBI" id="CHEBI:57292"/>
        <dbReference type="ChEBI" id="CHEBI:58189"/>
    </reaction>
    <physiologicalReaction direction="right-to-left" evidence="1">
        <dbReference type="Rhea" id="RHEA:22122"/>
    </physiologicalReaction>
</comment>
<comment type="cofactor">
    <cofactor evidence="1">
        <name>Mg(2+)</name>
        <dbReference type="ChEBI" id="CHEBI:18420"/>
    </cofactor>
    <text evidence="1">Binds 1 Mg(2+) ion per subunit.</text>
</comment>
<comment type="pathway">
    <text evidence="1">Carbohydrate metabolism; tricarboxylic acid cycle; succinate from succinyl-CoA (ligase route): step 1/1.</text>
</comment>
<comment type="subunit">
    <text evidence="1">Heterotetramer of two alpha and two beta subunits.</text>
</comment>
<comment type="similarity">
    <text evidence="1">Belongs to the succinate/malate CoA ligase beta subunit family.</text>
</comment>
<gene>
    <name evidence="1" type="primary">sucC</name>
    <name type="ordered locus">ELI_13520</name>
</gene>
<reference key="1">
    <citation type="journal article" date="2009" name="J. Bacteriol.">
        <title>Complete genome sequence of Erythrobacter litoralis HTCC2594.</title>
        <authorList>
            <person name="Oh H.M."/>
            <person name="Giovannoni S.J."/>
            <person name="Ferriera S."/>
            <person name="Johnson J."/>
            <person name="Cho J.C."/>
        </authorList>
    </citation>
    <scope>NUCLEOTIDE SEQUENCE [LARGE SCALE GENOMIC DNA]</scope>
    <source>
        <strain>HTCC2594</strain>
    </source>
</reference>
<organism>
    <name type="scientific">Erythrobacter litoralis (strain HTCC2594)</name>
    <dbReference type="NCBI Taxonomy" id="314225"/>
    <lineage>
        <taxon>Bacteria</taxon>
        <taxon>Pseudomonadati</taxon>
        <taxon>Pseudomonadota</taxon>
        <taxon>Alphaproteobacteria</taxon>
        <taxon>Sphingomonadales</taxon>
        <taxon>Erythrobacteraceae</taxon>
        <taxon>Erythrobacter/Porphyrobacter group</taxon>
        <taxon>Erythrobacter</taxon>
    </lineage>
</organism>
<proteinExistence type="inferred from homology"/>
<name>SUCC_ERYLH</name>
<protein>
    <recommendedName>
        <fullName evidence="1">Succinate--CoA ligase [ADP-forming] subunit beta</fullName>
        <ecNumber evidence="1">6.2.1.5</ecNumber>
    </recommendedName>
    <alternativeName>
        <fullName evidence="1">Succinyl-CoA synthetase subunit beta</fullName>
        <shortName evidence="1">SCS-beta</shortName>
    </alternativeName>
</protein>
<feature type="chain" id="PRO_1000082083" description="Succinate--CoA ligase [ADP-forming] subunit beta">
    <location>
        <begin position="1"/>
        <end position="399"/>
    </location>
</feature>
<feature type="domain" description="ATP-grasp" evidence="1">
    <location>
        <begin position="9"/>
        <end position="254"/>
    </location>
</feature>
<feature type="binding site" evidence="1">
    <location>
        <position position="46"/>
    </location>
    <ligand>
        <name>ATP</name>
        <dbReference type="ChEBI" id="CHEBI:30616"/>
    </ligand>
</feature>
<feature type="binding site" evidence="1">
    <location>
        <begin position="53"/>
        <end position="55"/>
    </location>
    <ligand>
        <name>ATP</name>
        <dbReference type="ChEBI" id="CHEBI:30616"/>
    </ligand>
</feature>
<feature type="binding site" evidence="1">
    <location>
        <position position="112"/>
    </location>
    <ligand>
        <name>ATP</name>
        <dbReference type="ChEBI" id="CHEBI:30616"/>
    </ligand>
</feature>
<feature type="binding site" evidence="1">
    <location>
        <position position="117"/>
    </location>
    <ligand>
        <name>ATP</name>
        <dbReference type="ChEBI" id="CHEBI:30616"/>
    </ligand>
</feature>
<feature type="binding site" evidence="1">
    <location>
        <position position="209"/>
    </location>
    <ligand>
        <name>Mg(2+)</name>
        <dbReference type="ChEBI" id="CHEBI:18420"/>
    </ligand>
</feature>
<feature type="binding site" evidence="1">
    <location>
        <position position="223"/>
    </location>
    <ligand>
        <name>Mg(2+)</name>
        <dbReference type="ChEBI" id="CHEBI:18420"/>
    </ligand>
</feature>
<feature type="binding site" evidence="1">
    <location>
        <position position="274"/>
    </location>
    <ligand>
        <name>substrate</name>
        <note>ligand shared with subunit alpha</note>
    </ligand>
</feature>
<feature type="binding site" evidence="1">
    <location>
        <begin position="331"/>
        <end position="333"/>
    </location>
    <ligand>
        <name>substrate</name>
        <note>ligand shared with subunit alpha</note>
    </ligand>
</feature>
<dbReference type="EC" id="6.2.1.5" evidence="1"/>
<dbReference type="EMBL" id="CP000157">
    <property type="protein sequence ID" value="ABC64796.1"/>
    <property type="molecule type" value="Genomic_DNA"/>
</dbReference>
<dbReference type="RefSeq" id="WP_011415618.1">
    <property type="nucleotide sequence ID" value="NC_007722.1"/>
</dbReference>
<dbReference type="SMR" id="Q2N695"/>
<dbReference type="STRING" id="314225.ELI_13520"/>
<dbReference type="KEGG" id="eli:ELI_13520"/>
<dbReference type="eggNOG" id="COG0045">
    <property type="taxonomic scope" value="Bacteria"/>
</dbReference>
<dbReference type="HOGENOM" id="CLU_037430_0_2_5"/>
<dbReference type="OrthoDB" id="9802602at2"/>
<dbReference type="UniPathway" id="UPA00223">
    <property type="reaction ID" value="UER00999"/>
</dbReference>
<dbReference type="Proteomes" id="UP000008808">
    <property type="component" value="Chromosome"/>
</dbReference>
<dbReference type="GO" id="GO:0005829">
    <property type="term" value="C:cytosol"/>
    <property type="evidence" value="ECO:0007669"/>
    <property type="project" value="TreeGrafter"/>
</dbReference>
<dbReference type="GO" id="GO:0042709">
    <property type="term" value="C:succinate-CoA ligase complex"/>
    <property type="evidence" value="ECO:0007669"/>
    <property type="project" value="TreeGrafter"/>
</dbReference>
<dbReference type="GO" id="GO:0005524">
    <property type="term" value="F:ATP binding"/>
    <property type="evidence" value="ECO:0007669"/>
    <property type="project" value="UniProtKB-UniRule"/>
</dbReference>
<dbReference type="GO" id="GO:0000287">
    <property type="term" value="F:magnesium ion binding"/>
    <property type="evidence" value="ECO:0007669"/>
    <property type="project" value="UniProtKB-UniRule"/>
</dbReference>
<dbReference type="GO" id="GO:0004775">
    <property type="term" value="F:succinate-CoA ligase (ADP-forming) activity"/>
    <property type="evidence" value="ECO:0007669"/>
    <property type="project" value="UniProtKB-UniRule"/>
</dbReference>
<dbReference type="GO" id="GO:0004776">
    <property type="term" value="F:succinate-CoA ligase (GDP-forming) activity"/>
    <property type="evidence" value="ECO:0007669"/>
    <property type="project" value="RHEA"/>
</dbReference>
<dbReference type="GO" id="GO:0006104">
    <property type="term" value="P:succinyl-CoA metabolic process"/>
    <property type="evidence" value="ECO:0007669"/>
    <property type="project" value="TreeGrafter"/>
</dbReference>
<dbReference type="GO" id="GO:0006099">
    <property type="term" value="P:tricarboxylic acid cycle"/>
    <property type="evidence" value="ECO:0007669"/>
    <property type="project" value="UniProtKB-UniRule"/>
</dbReference>
<dbReference type="FunFam" id="3.30.1490.20:FF:000002">
    <property type="entry name" value="Succinate--CoA ligase [ADP-forming] subunit beta"/>
    <property type="match status" value="1"/>
</dbReference>
<dbReference type="FunFam" id="3.30.470.20:FF:000002">
    <property type="entry name" value="Succinate--CoA ligase [ADP-forming] subunit beta"/>
    <property type="match status" value="1"/>
</dbReference>
<dbReference type="FunFam" id="3.40.50.261:FF:000001">
    <property type="entry name" value="Succinate--CoA ligase [ADP-forming] subunit beta"/>
    <property type="match status" value="1"/>
</dbReference>
<dbReference type="Gene3D" id="3.30.1490.20">
    <property type="entry name" value="ATP-grasp fold, A domain"/>
    <property type="match status" value="1"/>
</dbReference>
<dbReference type="Gene3D" id="3.30.470.20">
    <property type="entry name" value="ATP-grasp fold, B domain"/>
    <property type="match status" value="1"/>
</dbReference>
<dbReference type="Gene3D" id="3.40.50.261">
    <property type="entry name" value="Succinyl-CoA synthetase domains"/>
    <property type="match status" value="1"/>
</dbReference>
<dbReference type="HAMAP" id="MF_00558">
    <property type="entry name" value="Succ_CoA_beta"/>
    <property type="match status" value="1"/>
</dbReference>
<dbReference type="InterPro" id="IPR011761">
    <property type="entry name" value="ATP-grasp"/>
</dbReference>
<dbReference type="InterPro" id="IPR013650">
    <property type="entry name" value="ATP-grasp_succ-CoA_synth-type"/>
</dbReference>
<dbReference type="InterPro" id="IPR013815">
    <property type="entry name" value="ATP_grasp_subdomain_1"/>
</dbReference>
<dbReference type="InterPro" id="IPR017866">
    <property type="entry name" value="Succ-CoA_synthase_bsu_CS"/>
</dbReference>
<dbReference type="InterPro" id="IPR005811">
    <property type="entry name" value="SUCC_ACL_C"/>
</dbReference>
<dbReference type="InterPro" id="IPR005809">
    <property type="entry name" value="Succ_CoA_ligase-like_bsu"/>
</dbReference>
<dbReference type="InterPro" id="IPR016102">
    <property type="entry name" value="Succinyl-CoA_synth-like"/>
</dbReference>
<dbReference type="NCBIfam" id="NF001913">
    <property type="entry name" value="PRK00696.1"/>
    <property type="match status" value="1"/>
</dbReference>
<dbReference type="NCBIfam" id="TIGR01016">
    <property type="entry name" value="sucCoAbeta"/>
    <property type="match status" value="1"/>
</dbReference>
<dbReference type="PANTHER" id="PTHR11815:SF10">
    <property type="entry name" value="SUCCINATE--COA LIGASE [GDP-FORMING] SUBUNIT BETA, MITOCHONDRIAL"/>
    <property type="match status" value="1"/>
</dbReference>
<dbReference type="PANTHER" id="PTHR11815">
    <property type="entry name" value="SUCCINYL-COA SYNTHETASE BETA CHAIN"/>
    <property type="match status" value="1"/>
</dbReference>
<dbReference type="Pfam" id="PF08442">
    <property type="entry name" value="ATP-grasp_2"/>
    <property type="match status" value="1"/>
</dbReference>
<dbReference type="Pfam" id="PF00549">
    <property type="entry name" value="Ligase_CoA"/>
    <property type="match status" value="1"/>
</dbReference>
<dbReference type="PIRSF" id="PIRSF001554">
    <property type="entry name" value="SucCS_beta"/>
    <property type="match status" value="1"/>
</dbReference>
<dbReference type="SUPFAM" id="SSF56059">
    <property type="entry name" value="Glutathione synthetase ATP-binding domain-like"/>
    <property type="match status" value="1"/>
</dbReference>
<dbReference type="SUPFAM" id="SSF52210">
    <property type="entry name" value="Succinyl-CoA synthetase domains"/>
    <property type="match status" value="1"/>
</dbReference>
<dbReference type="PROSITE" id="PS50975">
    <property type="entry name" value="ATP_GRASP"/>
    <property type="match status" value="1"/>
</dbReference>
<dbReference type="PROSITE" id="PS01217">
    <property type="entry name" value="SUCCINYL_COA_LIG_3"/>
    <property type="match status" value="1"/>
</dbReference>